<gene>
    <name evidence="8" type="primary">PCDHA4</name>
</gene>
<protein>
    <recommendedName>
        <fullName evidence="7">Protocadherin alpha-4</fullName>
        <shortName evidence="7">PCDH-alpha-4</shortName>
    </recommendedName>
</protein>
<keyword id="KW-0025">Alternative splicing</keyword>
<keyword id="KW-0106">Calcium</keyword>
<keyword id="KW-0130">Cell adhesion</keyword>
<keyword id="KW-1003">Cell membrane</keyword>
<keyword id="KW-1015">Disulfide bond</keyword>
<keyword id="KW-0325">Glycoprotein</keyword>
<keyword id="KW-0472">Membrane</keyword>
<keyword id="KW-0479">Metal-binding</keyword>
<keyword id="KW-1267">Proteomics identification</keyword>
<keyword id="KW-1185">Reference proteome</keyword>
<keyword id="KW-0677">Repeat</keyword>
<keyword id="KW-0732">Signal</keyword>
<keyword id="KW-0812">Transmembrane</keyword>
<keyword id="KW-1133">Transmembrane helix</keyword>
<proteinExistence type="evidence at protein level"/>
<reference key="1">
    <citation type="journal article" date="1999" name="Cell">
        <title>A striking organization of a large family of human neural cadherin-like cell adhesion genes.</title>
        <authorList>
            <person name="Wu Q."/>
            <person name="Maniatis T."/>
        </authorList>
    </citation>
    <scope>NUCLEOTIDE SEQUENCE [MRNA] (ISOFORMS 1 AND 2)</scope>
    <source>
        <tissue>Brain</tissue>
    </source>
</reference>
<reference key="2">
    <citation type="journal article" date="2004" name="Nature">
        <title>The DNA sequence and comparative analysis of human chromosome 5.</title>
        <authorList>
            <person name="Schmutz J."/>
            <person name="Martin J."/>
            <person name="Terry A."/>
            <person name="Couronne O."/>
            <person name="Grimwood J."/>
            <person name="Lowry S."/>
            <person name="Gordon L.A."/>
            <person name="Scott D."/>
            <person name="Xie G."/>
            <person name="Huang W."/>
            <person name="Hellsten U."/>
            <person name="Tran-Gyamfi M."/>
            <person name="She X."/>
            <person name="Prabhakar S."/>
            <person name="Aerts A."/>
            <person name="Altherr M."/>
            <person name="Bajorek E."/>
            <person name="Black S."/>
            <person name="Branscomb E."/>
            <person name="Caoile C."/>
            <person name="Challacombe J.F."/>
            <person name="Chan Y.M."/>
            <person name="Denys M."/>
            <person name="Detter J.C."/>
            <person name="Escobar J."/>
            <person name="Flowers D."/>
            <person name="Fotopulos D."/>
            <person name="Glavina T."/>
            <person name="Gomez M."/>
            <person name="Gonzales E."/>
            <person name="Goodstein D."/>
            <person name="Grigoriev I."/>
            <person name="Groza M."/>
            <person name="Hammon N."/>
            <person name="Hawkins T."/>
            <person name="Haydu L."/>
            <person name="Israni S."/>
            <person name="Jett J."/>
            <person name="Kadner K."/>
            <person name="Kimball H."/>
            <person name="Kobayashi A."/>
            <person name="Lopez F."/>
            <person name="Lou Y."/>
            <person name="Martinez D."/>
            <person name="Medina C."/>
            <person name="Morgan J."/>
            <person name="Nandkeshwar R."/>
            <person name="Noonan J.P."/>
            <person name="Pitluck S."/>
            <person name="Pollard M."/>
            <person name="Predki P."/>
            <person name="Priest J."/>
            <person name="Ramirez L."/>
            <person name="Retterer J."/>
            <person name="Rodriguez A."/>
            <person name="Rogers S."/>
            <person name="Salamov A."/>
            <person name="Salazar A."/>
            <person name="Thayer N."/>
            <person name="Tice H."/>
            <person name="Tsai M."/>
            <person name="Ustaszewska A."/>
            <person name="Vo N."/>
            <person name="Wheeler J."/>
            <person name="Wu K."/>
            <person name="Yang J."/>
            <person name="Dickson M."/>
            <person name="Cheng J.-F."/>
            <person name="Eichler E.E."/>
            <person name="Olsen A."/>
            <person name="Pennacchio L.A."/>
            <person name="Rokhsar D.S."/>
            <person name="Richardson P."/>
            <person name="Lucas S.M."/>
            <person name="Myers R.M."/>
            <person name="Rubin E.M."/>
        </authorList>
    </citation>
    <scope>NUCLEOTIDE SEQUENCE [LARGE SCALE GENOMIC DNA]</scope>
</reference>
<reference key="3">
    <citation type="journal article" date="2004" name="Genome Res.">
        <title>The status, quality, and expansion of the NIH full-length cDNA project: the Mammalian Gene Collection (MGC).</title>
        <authorList>
            <consortium name="The MGC Project Team"/>
        </authorList>
    </citation>
    <scope>NUCLEOTIDE SEQUENCE [LARGE SCALE MRNA] (ISOFORM 2)</scope>
    <source>
        <tissue>Lung</tissue>
    </source>
</reference>
<sequence>MEFSWGSGQESRRLLLLLLLLAAWEAGNGQLHYSVSEEAKHGTFVGRIAQDLGLELAELVPRLFRVASKGRGGLLEVNLQNGILFVNSRIDREELCRRSAECSIHLEVIVDRPLQVFHVDVEVRDINDNPPVFPATQKNLSIAESRPLDSRFPLEGASDADIGENALLTYRLSPNEYFSLEKPPDDELVKGLGLILRKSLDREEAPEIFLVLTATDGGKPELTGTVQLLITVLDANDNAPAFDRTIYKVRLLENVPNGTLVIKLNASDLDEGLNGDIVYSFSNDISPNVKSKFHIDPITGQIIVKGYIDFEESKSYEIIVEGIDKGQLPLSGHCRVIVEVEDNNDNVPDLEFKSLSLPIREDAPLGTVIALISVSDKDMGVNGLVTCSLTSHVPFKLVSTFKNYYSLVLDSALDRESVSAYELVVTARDGGSPSLWATASVSVEVADVNDNAPAFAQPEYTVFVKENNPPGCHIFTVSAWDADAQENALVSYSLVERRVGERALSSYVSVHAESGKVYALQPLDHEELELLQFQVTARDAGVPPLGSNVTLQVFVLDENDNAPALLAPRAGGTGGAVSELVPWSVGVGHVVAKVRAVDADSGYNAWLSYELQPGTGGARIPFRVGLYTGEISTTRALDETDAPRHRLLVLVKDHGEPALTATATVLVSLVESGQAPKASSRALVGAVGPDAALVDVNVYLIIAICAVSSLLVLTLLLYTALRCSALPTEGACAPGKPTLVCSSAVGSWSYSQQRRPRVCSGEGPPKTDLMAFSPSLPDSRDREDQLQTTEESFAKPRQPNPDWRYSASLRAGMHSSVHLEEAGILRAGPGGPDQQWPTVSSATPEPEAGEVSPPVGAGVNSNSWTFKYGPGNPKQSGPGELPDKFIIPGSPAIISIRQEPTNSQIDKSDFITFGKKEETKKKKKKKKGNKTQEKKEKGNSTTDNSDQ</sequence>
<name>PCDA4_HUMAN</name>
<organism>
    <name type="scientific">Homo sapiens</name>
    <name type="common">Human</name>
    <dbReference type="NCBI Taxonomy" id="9606"/>
    <lineage>
        <taxon>Eukaryota</taxon>
        <taxon>Metazoa</taxon>
        <taxon>Chordata</taxon>
        <taxon>Craniata</taxon>
        <taxon>Vertebrata</taxon>
        <taxon>Euteleostomi</taxon>
        <taxon>Mammalia</taxon>
        <taxon>Eutheria</taxon>
        <taxon>Euarchontoglires</taxon>
        <taxon>Primates</taxon>
        <taxon>Haplorrhini</taxon>
        <taxon>Catarrhini</taxon>
        <taxon>Hominidae</taxon>
        <taxon>Homo</taxon>
    </lineage>
</organism>
<feature type="signal peptide" evidence="2">
    <location>
        <begin position="1"/>
        <end position="29"/>
    </location>
</feature>
<feature type="chain" id="PRO_0000003890" description="Protocadherin alpha-4">
    <location>
        <begin position="30"/>
        <end position="947"/>
    </location>
</feature>
<feature type="topological domain" description="Extracellular" evidence="1">
    <location>
        <begin position="30"/>
        <end position="697"/>
    </location>
</feature>
<feature type="transmembrane region" description="Helical" evidence="2">
    <location>
        <begin position="698"/>
        <end position="718"/>
    </location>
</feature>
<feature type="topological domain" description="Cytoplasmic" evidence="1">
    <location>
        <begin position="719"/>
        <end position="947"/>
    </location>
</feature>
<feature type="domain" description="Cadherin 1" evidence="3">
    <location>
        <begin position="30"/>
        <end position="133"/>
    </location>
</feature>
<feature type="domain" description="Cadherin 2" evidence="3">
    <location>
        <begin position="134"/>
        <end position="242"/>
    </location>
</feature>
<feature type="domain" description="Cadherin 3" evidence="3">
    <location>
        <begin position="243"/>
        <end position="350"/>
    </location>
</feature>
<feature type="domain" description="Cadherin 4" evidence="3">
    <location>
        <begin position="351"/>
        <end position="455"/>
    </location>
</feature>
<feature type="domain" description="Cadherin 5" evidence="3">
    <location>
        <begin position="456"/>
        <end position="565"/>
    </location>
</feature>
<feature type="domain" description="Cadherin 6" evidence="3">
    <location>
        <begin position="588"/>
        <end position="678"/>
    </location>
</feature>
<feature type="repeat" description="PXXP 1">
    <location>
        <begin position="734"/>
        <end position="737"/>
    </location>
</feature>
<feature type="repeat" description="PXXP 2">
    <location>
        <begin position="774"/>
        <end position="777"/>
    </location>
</feature>
<feature type="repeat" description="PXXP 3">
    <location>
        <begin position="796"/>
        <end position="799"/>
    </location>
</feature>
<feature type="repeat" description="PXXP 4">
    <location>
        <begin position="829"/>
        <end position="832"/>
    </location>
</feature>
<feature type="repeat" description="PXXP 5">
    <location>
        <begin position="870"/>
        <end position="873"/>
    </location>
</feature>
<feature type="repeat" description="PXXP 6">
    <location>
        <begin position="888"/>
        <end position="891"/>
    </location>
</feature>
<feature type="region of interest" description="6 X 4 AA repeats of P-X-X-P">
    <location>
        <begin position="734"/>
        <end position="891"/>
    </location>
</feature>
<feature type="region of interest" description="Required for interaction with FYN" evidence="1">
    <location>
        <begin position="738"/>
        <end position="947"/>
    </location>
</feature>
<feature type="region of interest" description="Disordered" evidence="4">
    <location>
        <begin position="754"/>
        <end position="805"/>
    </location>
</feature>
<feature type="region of interest" description="Disordered" evidence="4">
    <location>
        <begin position="828"/>
        <end position="853"/>
    </location>
</feature>
<feature type="region of interest" description="Disordered" evidence="4">
    <location>
        <begin position="868"/>
        <end position="947"/>
    </location>
</feature>
<feature type="compositionally biased region" description="Basic and acidic residues" evidence="4">
    <location>
        <begin position="906"/>
        <end position="920"/>
    </location>
</feature>
<feature type="glycosylation site" description="N-linked (GlcNAc...) asparagine" evidence="2">
    <location>
        <position position="139"/>
    </location>
</feature>
<feature type="glycosylation site" description="N-linked (GlcNAc...) asparagine" evidence="2">
    <location>
        <position position="257"/>
    </location>
</feature>
<feature type="glycosylation site" description="N-linked (GlcNAc...) asparagine" evidence="2">
    <location>
        <position position="265"/>
    </location>
</feature>
<feature type="glycosylation site" description="N-linked (GlcNAc...) asparagine" evidence="2">
    <location>
        <position position="548"/>
    </location>
</feature>
<feature type="disulfide bond" evidence="1">
    <location>
        <begin position="96"/>
        <end position="102"/>
    </location>
</feature>
<feature type="splice variant" id="VSP_000677" description="In isoform 2." evidence="5 6">
    <original>PRQ</original>
    <variation>VSV</variation>
    <location>
        <begin position="796"/>
        <end position="798"/>
    </location>
</feature>
<feature type="splice variant" id="VSP_000678" description="In isoform 2." evidence="5 6">
    <location>
        <begin position="799"/>
        <end position="947"/>
    </location>
</feature>
<feature type="sequence variant" id="VAR_059180" description="In dbSNP:rs11167605.">
    <original>E</original>
    <variation>D</variation>
    <location>
        <position position="55"/>
    </location>
</feature>
<feature type="sequence variant" id="VAR_024390" description="In dbSNP:rs3822346.">
    <original>P</original>
    <variation>S</variation>
    <location>
        <position position="184"/>
    </location>
</feature>
<comment type="function">
    <text evidence="1">Calcium-dependent cell-adhesion protein involved in cells self-recognition and non-self discrimination. Thereby, it is involved in the establishment and maintenance of specific neuronal connections in the brain.</text>
</comment>
<comment type="subunit">
    <text evidence="1">Forms homodimers in trans (molecules expressed by two different cells). Forms promiscuous heterodimers in cis (at the plasma membrane of the same cell) with other protocadherins. Interacts with FYN.</text>
</comment>
<comment type="interaction">
    <interactant intactId="EBI-712273">
        <id>Q9UN74</id>
    </interactant>
    <interactant intactId="EBI-347996">
        <id>O43765</id>
        <label>SGTA</label>
    </interactant>
    <organismsDiffer>false</organismsDiffer>
    <experiments>3</experiments>
</comment>
<comment type="interaction">
    <interactant intactId="EBI-12184485">
        <id>Q9UN74-2</id>
    </interactant>
    <interactant intactId="EBI-741480">
        <id>Q9UMX0</id>
        <label>UBQLN1</label>
    </interactant>
    <organismsDiffer>false</organismsDiffer>
    <experiments>3</experiments>
</comment>
<comment type="subcellular location">
    <subcellularLocation>
        <location evidence="1">Cell membrane</location>
        <topology evidence="1">Single-pass type I membrane protein</topology>
    </subcellularLocation>
    <text evidence="1">Detected in dendrites and synapses.</text>
</comment>
<comment type="alternative products">
    <event type="alternative splicing"/>
    <isoform>
        <id>Q9UN74-1</id>
        <name>1</name>
        <sequence type="displayed"/>
    </isoform>
    <isoform>
        <id>Q9UN74-2</id>
        <name>2</name>
        <sequence type="described" ref="VSP_000677 VSP_000678"/>
    </isoform>
</comment>
<comment type="domain">
    <text evidence="1">Cadherin 1 to cadherin 4 domains mediate homophilic trans-interaction, the interaction with an identical protocadherin expressed by a neighboring cell. This is a head-to-tail interaction, the cadherin 1 domain interacting with the cadherin 4 domain and the cadherin 2 domain interacting the cadherin 3 domain of the other protocadherin. The cadherin 6 domain mediates promiscuous interactions with protocadherins on the same cell membrane. Each cadherin domain binds three calcium ions.</text>
</comment>
<dbReference type="EMBL" id="AF152312">
    <property type="protein sequence ID" value="AAD43706.1"/>
    <property type="molecule type" value="mRNA"/>
</dbReference>
<dbReference type="EMBL" id="AF152482">
    <property type="protein sequence ID" value="AAD43743.1"/>
    <property type="molecule type" value="mRNA"/>
</dbReference>
<dbReference type="EMBL" id="AC005609">
    <property type="protein sequence ID" value="AAC34322.1"/>
    <property type="molecule type" value="Genomic_DNA"/>
</dbReference>
<dbReference type="EMBL" id="BC112102">
    <property type="protein sequence ID" value="AAI12103.1"/>
    <property type="molecule type" value="mRNA"/>
</dbReference>
<dbReference type="EMBL" id="BC113609">
    <property type="protein sequence ID" value="AAI13610.1"/>
    <property type="molecule type" value="mRNA"/>
</dbReference>
<dbReference type="CCDS" id="CCDS54916.1">
    <molecule id="Q9UN74-1"/>
</dbReference>
<dbReference type="RefSeq" id="NP_061730.1">
    <molecule id="Q9UN74-1"/>
    <property type="nucleotide sequence ID" value="NM_018907.4"/>
</dbReference>
<dbReference type="RefSeq" id="NP_113688.1">
    <molecule id="Q9UN74-2"/>
    <property type="nucleotide sequence ID" value="NM_031500.3"/>
</dbReference>
<dbReference type="SMR" id="Q9UN74"/>
<dbReference type="BioGRID" id="121084">
    <property type="interactions" value="62"/>
</dbReference>
<dbReference type="FunCoup" id="Q9UN74">
    <property type="interactions" value="75"/>
</dbReference>
<dbReference type="IntAct" id="Q9UN74">
    <property type="interactions" value="55"/>
</dbReference>
<dbReference type="STRING" id="9606.ENSP00000435300"/>
<dbReference type="GlyCosmos" id="Q9UN74">
    <property type="glycosylation" value="4 sites, No reported glycans"/>
</dbReference>
<dbReference type="GlyGen" id="Q9UN74">
    <property type="glycosylation" value="4 sites"/>
</dbReference>
<dbReference type="iPTMnet" id="Q9UN74"/>
<dbReference type="PhosphoSitePlus" id="Q9UN74"/>
<dbReference type="BioMuta" id="PCDHA4"/>
<dbReference type="DMDM" id="13878424"/>
<dbReference type="jPOST" id="Q9UN74"/>
<dbReference type="MassIVE" id="Q9UN74"/>
<dbReference type="PaxDb" id="9606-ENSP00000435300"/>
<dbReference type="PeptideAtlas" id="Q9UN74"/>
<dbReference type="ProteomicsDB" id="85264">
    <molecule id="Q9UN74-1"/>
</dbReference>
<dbReference type="ProteomicsDB" id="85265">
    <molecule id="Q9UN74-2"/>
</dbReference>
<dbReference type="TopDownProteomics" id="Q9UN74-2">
    <molecule id="Q9UN74-2"/>
</dbReference>
<dbReference type="Antibodypedia" id="27119">
    <property type="antibodies" value="109 antibodies from 17 providers"/>
</dbReference>
<dbReference type="DNASU" id="56144"/>
<dbReference type="Ensembl" id="ENST00000530339.2">
    <molecule id="Q9UN74-1"/>
    <property type="protein sequence ID" value="ENSP00000435300.1"/>
    <property type="gene ID" value="ENSG00000204967.13"/>
</dbReference>
<dbReference type="Ensembl" id="ENST00000618834.1">
    <molecule id="Q9UN74-2"/>
    <property type="protein sequence ID" value="ENSP00000481220.1"/>
    <property type="gene ID" value="ENSG00000204967.13"/>
</dbReference>
<dbReference type="Ensembl" id="ENST00000708294.1">
    <molecule id="Q9UN74-2"/>
    <property type="protein sequence ID" value="ENSP00000517145.1"/>
    <property type="gene ID" value="ENSG00000291652.1"/>
</dbReference>
<dbReference type="Ensembl" id="ENST00000708295.1">
    <molecule id="Q9UN74-1"/>
    <property type="protein sequence ID" value="ENSP00000517146.1"/>
    <property type="gene ID" value="ENSG00000291652.1"/>
</dbReference>
<dbReference type="GeneID" id="56144"/>
<dbReference type="KEGG" id="hsa:56144"/>
<dbReference type="MANE-Select" id="ENST00000530339.2">
    <property type="protein sequence ID" value="ENSP00000435300.1"/>
    <property type="RefSeq nucleotide sequence ID" value="NM_018907.4"/>
    <property type="RefSeq protein sequence ID" value="NP_061730.1"/>
</dbReference>
<dbReference type="UCSC" id="uc003lhi.4">
    <molecule id="Q9UN74-1"/>
    <property type="organism name" value="human"/>
</dbReference>
<dbReference type="AGR" id="HGNC:8670"/>
<dbReference type="CTD" id="56144"/>
<dbReference type="DisGeNET" id="56144"/>
<dbReference type="GeneCards" id="PCDHA4"/>
<dbReference type="HGNC" id="HGNC:8670">
    <property type="gene designation" value="PCDHA4"/>
</dbReference>
<dbReference type="HPA" id="ENSG00000204967">
    <property type="expression patterns" value="Tissue enhanced (brain)"/>
</dbReference>
<dbReference type="MalaCards" id="PCDHA4"/>
<dbReference type="MIM" id="604966">
    <property type="type" value="gene"/>
</dbReference>
<dbReference type="MIM" id="606310">
    <property type="type" value="gene"/>
</dbReference>
<dbReference type="neXtProt" id="NX_Q9UN74"/>
<dbReference type="OpenTargets" id="ENSG00000204967"/>
<dbReference type="PharmGKB" id="PA33016"/>
<dbReference type="VEuPathDB" id="HostDB:ENSG00000204967"/>
<dbReference type="eggNOG" id="KOG3594">
    <property type="taxonomic scope" value="Eukaryota"/>
</dbReference>
<dbReference type="GeneTree" id="ENSGT00940000163846"/>
<dbReference type="HOGENOM" id="CLU_006480_0_1_1"/>
<dbReference type="InParanoid" id="Q9UN74"/>
<dbReference type="OMA" id="FRMMSQG"/>
<dbReference type="OrthoDB" id="6252479at2759"/>
<dbReference type="PAN-GO" id="Q9UN74">
    <property type="GO annotations" value="2 GO annotations based on evolutionary models"/>
</dbReference>
<dbReference type="PhylomeDB" id="Q9UN74"/>
<dbReference type="TreeFam" id="TF332299"/>
<dbReference type="PathwayCommons" id="Q9UN74"/>
<dbReference type="SignaLink" id="Q9UN74"/>
<dbReference type="SIGNOR" id="Q9UN74"/>
<dbReference type="BioGRID-ORCS" id="56144">
    <property type="hits" value="36 hits in 1106 CRISPR screens"/>
</dbReference>
<dbReference type="GeneWiki" id="PCDHA4"/>
<dbReference type="GenomeRNAi" id="56144"/>
<dbReference type="Pharos" id="Q9UN74">
    <property type="development level" value="Tdark"/>
</dbReference>
<dbReference type="PRO" id="PR:Q9UN74"/>
<dbReference type="Proteomes" id="UP000005640">
    <property type="component" value="Chromosome 5"/>
</dbReference>
<dbReference type="RNAct" id="Q9UN74">
    <property type="molecule type" value="protein"/>
</dbReference>
<dbReference type="Bgee" id="ENSG00000204967">
    <property type="expression patterns" value="Expressed in cortical plate and 81 other cell types or tissues"/>
</dbReference>
<dbReference type="ExpressionAtlas" id="Q9UN74">
    <property type="expression patterns" value="baseline and differential"/>
</dbReference>
<dbReference type="GO" id="GO:0005886">
    <property type="term" value="C:plasma membrane"/>
    <property type="evidence" value="ECO:0000318"/>
    <property type="project" value="GO_Central"/>
</dbReference>
<dbReference type="GO" id="GO:0005509">
    <property type="term" value="F:calcium ion binding"/>
    <property type="evidence" value="ECO:0000250"/>
    <property type="project" value="UniProtKB"/>
</dbReference>
<dbReference type="GO" id="GO:0042802">
    <property type="term" value="F:identical protein binding"/>
    <property type="evidence" value="ECO:0000250"/>
    <property type="project" value="UniProtKB"/>
</dbReference>
<dbReference type="GO" id="GO:0007155">
    <property type="term" value="P:cell adhesion"/>
    <property type="evidence" value="ECO:0000318"/>
    <property type="project" value="GO_Central"/>
</dbReference>
<dbReference type="GO" id="GO:0007156">
    <property type="term" value="P:homophilic cell adhesion via plasma membrane adhesion molecules"/>
    <property type="evidence" value="ECO:0007669"/>
    <property type="project" value="InterPro"/>
</dbReference>
<dbReference type="GO" id="GO:0007399">
    <property type="term" value="P:nervous system development"/>
    <property type="evidence" value="ECO:0000304"/>
    <property type="project" value="ProtInc"/>
</dbReference>
<dbReference type="CDD" id="cd11304">
    <property type="entry name" value="Cadherin_repeat"/>
    <property type="match status" value="6"/>
</dbReference>
<dbReference type="FunFam" id="2.60.40.60:FF:000001">
    <property type="entry name" value="Protocadherin alpha 2"/>
    <property type="match status" value="1"/>
</dbReference>
<dbReference type="FunFam" id="2.60.40.60:FF:000002">
    <property type="entry name" value="Protocadherin alpha 2"/>
    <property type="match status" value="1"/>
</dbReference>
<dbReference type="FunFam" id="2.60.40.60:FF:000003">
    <property type="entry name" value="Protocadherin alpha 2"/>
    <property type="match status" value="1"/>
</dbReference>
<dbReference type="FunFam" id="2.60.40.60:FF:000006">
    <property type="entry name" value="Protocadherin alpha 2"/>
    <property type="match status" value="1"/>
</dbReference>
<dbReference type="FunFam" id="2.60.40.60:FF:000007">
    <property type="entry name" value="Protocadherin alpha 2"/>
    <property type="match status" value="1"/>
</dbReference>
<dbReference type="FunFam" id="2.60.40.60:FF:000076">
    <property type="entry name" value="Protocadherin alpha 2"/>
    <property type="match status" value="1"/>
</dbReference>
<dbReference type="Gene3D" id="2.60.40.60">
    <property type="entry name" value="Cadherins"/>
    <property type="match status" value="6"/>
</dbReference>
<dbReference type="InterPro" id="IPR002126">
    <property type="entry name" value="Cadherin-like_dom"/>
</dbReference>
<dbReference type="InterPro" id="IPR015919">
    <property type="entry name" value="Cadherin-like_sf"/>
</dbReference>
<dbReference type="InterPro" id="IPR031904">
    <property type="entry name" value="Cadherin_CBD"/>
</dbReference>
<dbReference type="InterPro" id="IPR020894">
    <property type="entry name" value="Cadherin_CS"/>
</dbReference>
<dbReference type="InterPro" id="IPR013164">
    <property type="entry name" value="Cadherin_N"/>
</dbReference>
<dbReference type="InterPro" id="IPR050174">
    <property type="entry name" value="Protocadherin/Cadherin-CA"/>
</dbReference>
<dbReference type="PANTHER" id="PTHR24028">
    <property type="entry name" value="CADHERIN-87A"/>
    <property type="match status" value="1"/>
</dbReference>
<dbReference type="PANTHER" id="PTHR24028:SF133">
    <property type="entry name" value="PROTOCADHERIN ALPHA-4"/>
    <property type="match status" value="1"/>
</dbReference>
<dbReference type="Pfam" id="PF00028">
    <property type="entry name" value="Cadherin"/>
    <property type="match status" value="5"/>
</dbReference>
<dbReference type="Pfam" id="PF08266">
    <property type="entry name" value="Cadherin_2"/>
    <property type="match status" value="1"/>
</dbReference>
<dbReference type="Pfam" id="PF15974">
    <property type="entry name" value="Cadherin_tail"/>
    <property type="match status" value="1"/>
</dbReference>
<dbReference type="PRINTS" id="PR00205">
    <property type="entry name" value="CADHERIN"/>
</dbReference>
<dbReference type="SMART" id="SM00112">
    <property type="entry name" value="CA"/>
    <property type="match status" value="6"/>
</dbReference>
<dbReference type="SUPFAM" id="SSF49313">
    <property type="entry name" value="Cadherin-like"/>
    <property type="match status" value="6"/>
</dbReference>
<dbReference type="PROSITE" id="PS00232">
    <property type="entry name" value="CADHERIN_1"/>
    <property type="match status" value="5"/>
</dbReference>
<dbReference type="PROSITE" id="PS50268">
    <property type="entry name" value="CADHERIN_2"/>
    <property type="match status" value="6"/>
</dbReference>
<accession>Q9UN74</accession>
<accession>O75285</accession>
<accession>Q2M253</accession>
<evidence type="ECO:0000250" key="1">
    <source>
        <dbReference type="UniProtKB" id="O88689"/>
    </source>
</evidence>
<evidence type="ECO:0000255" key="2"/>
<evidence type="ECO:0000255" key="3">
    <source>
        <dbReference type="PROSITE-ProRule" id="PRU00043"/>
    </source>
</evidence>
<evidence type="ECO:0000256" key="4">
    <source>
        <dbReference type="SAM" id="MobiDB-lite"/>
    </source>
</evidence>
<evidence type="ECO:0000303" key="5">
    <source>
    </source>
</evidence>
<evidence type="ECO:0000303" key="6">
    <source>
    </source>
</evidence>
<evidence type="ECO:0000305" key="7"/>
<evidence type="ECO:0000312" key="8">
    <source>
        <dbReference type="HGNC" id="HGNC:8670"/>
    </source>
</evidence>